<accession>Q1CXC6</accession>
<name>PAND_MYXXD</name>
<evidence type="ECO:0000255" key="1">
    <source>
        <dbReference type="HAMAP-Rule" id="MF_00446"/>
    </source>
</evidence>
<comment type="function">
    <text evidence="1">Catalyzes the pyruvoyl-dependent decarboxylation of aspartate to produce beta-alanine.</text>
</comment>
<comment type="catalytic activity">
    <reaction evidence="1">
        <text>L-aspartate + H(+) = beta-alanine + CO2</text>
        <dbReference type="Rhea" id="RHEA:19497"/>
        <dbReference type="ChEBI" id="CHEBI:15378"/>
        <dbReference type="ChEBI" id="CHEBI:16526"/>
        <dbReference type="ChEBI" id="CHEBI:29991"/>
        <dbReference type="ChEBI" id="CHEBI:57966"/>
        <dbReference type="EC" id="4.1.1.11"/>
    </reaction>
</comment>
<comment type="cofactor">
    <cofactor evidence="1">
        <name>pyruvate</name>
        <dbReference type="ChEBI" id="CHEBI:15361"/>
    </cofactor>
    <text evidence="1">Binds 1 pyruvoyl group covalently per subunit.</text>
</comment>
<comment type="pathway">
    <text evidence="1">Cofactor biosynthesis; (R)-pantothenate biosynthesis; beta-alanine from L-aspartate: step 1/1.</text>
</comment>
<comment type="subunit">
    <text evidence="1">Heterooctamer of four alpha and four beta subunits.</text>
</comment>
<comment type="subcellular location">
    <subcellularLocation>
        <location evidence="1">Cytoplasm</location>
    </subcellularLocation>
</comment>
<comment type="PTM">
    <text evidence="1">Is synthesized initially as an inactive proenzyme, which is activated by self-cleavage at a specific serine bond to produce a beta-subunit with a hydroxyl group at its C-terminus and an alpha-subunit with a pyruvoyl group at its N-terminus.</text>
</comment>
<comment type="similarity">
    <text evidence="1">Belongs to the PanD family.</text>
</comment>
<proteinExistence type="inferred from homology"/>
<dbReference type="EC" id="4.1.1.11" evidence="1"/>
<dbReference type="EMBL" id="CP000113">
    <property type="protein sequence ID" value="ABF87899.1"/>
    <property type="molecule type" value="Genomic_DNA"/>
</dbReference>
<dbReference type="RefSeq" id="WP_011556755.1">
    <property type="nucleotide sequence ID" value="NC_008095.1"/>
</dbReference>
<dbReference type="SMR" id="Q1CXC6"/>
<dbReference type="STRING" id="246197.MXAN_6830"/>
<dbReference type="EnsemblBacteria" id="ABF87899">
    <property type="protein sequence ID" value="ABF87899"/>
    <property type="gene ID" value="MXAN_6830"/>
</dbReference>
<dbReference type="GeneID" id="41364019"/>
<dbReference type="KEGG" id="mxa:MXAN_6830"/>
<dbReference type="eggNOG" id="COG0853">
    <property type="taxonomic scope" value="Bacteria"/>
</dbReference>
<dbReference type="HOGENOM" id="CLU_115305_2_0_7"/>
<dbReference type="OrthoDB" id="9803983at2"/>
<dbReference type="UniPathway" id="UPA00028">
    <property type="reaction ID" value="UER00002"/>
</dbReference>
<dbReference type="Proteomes" id="UP000002402">
    <property type="component" value="Chromosome"/>
</dbReference>
<dbReference type="GO" id="GO:0005829">
    <property type="term" value="C:cytosol"/>
    <property type="evidence" value="ECO:0007669"/>
    <property type="project" value="TreeGrafter"/>
</dbReference>
<dbReference type="GO" id="GO:0004068">
    <property type="term" value="F:aspartate 1-decarboxylase activity"/>
    <property type="evidence" value="ECO:0007669"/>
    <property type="project" value="UniProtKB-UniRule"/>
</dbReference>
<dbReference type="GO" id="GO:0006523">
    <property type="term" value="P:alanine biosynthetic process"/>
    <property type="evidence" value="ECO:0007669"/>
    <property type="project" value="InterPro"/>
</dbReference>
<dbReference type="GO" id="GO:0015940">
    <property type="term" value="P:pantothenate biosynthetic process"/>
    <property type="evidence" value="ECO:0007669"/>
    <property type="project" value="UniProtKB-UniRule"/>
</dbReference>
<dbReference type="CDD" id="cd06919">
    <property type="entry name" value="Asp_decarbox"/>
    <property type="match status" value="1"/>
</dbReference>
<dbReference type="Gene3D" id="2.40.40.20">
    <property type="match status" value="1"/>
</dbReference>
<dbReference type="HAMAP" id="MF_00446">
    <property type="entry name" value="PanD"/>
    <property type="match status" value="1"/>
</dbReference>
<dbReference type="InterPro" id="IPR009010">
    <property type="entry name" value="Asp_de-COase-like_dom_sf"/>
</dbReference>
<dbReference type="InterPro" id="IPR003190">
    <property type="entry name" value="Asp_decarbox"/>
</dbReference>
<dbReference type="NCBIfam" id="TIGR00223">
    <property type="entry name" value="panD"/>
    <property type="match status" value="1"/>
</dbReference>
<dbReference type="PANTHER" id="PTHR21012">
    <property type="entry name" value="ASPARTATE 1-DECARBOXYLASE"/>
    <property type="match status" value="1"/>
</dbReference>
<dbReference type="PANTHER" id="PTHR21012:SF0">
    <property type="entry name" value="ASPARTATE 1-DECARBOXYLASE"/>
    <property type="match status" value="1"/>
</dbReference>
<dbReference type="Pfam" id="PF02261">
    <property type="entry name" value="Asp_decarbox"/>
    <property type="match status" value="1"/>
</dbReference>
<dbReference type="PIRSF" id="PIRSF006246">
    <property type="entry name" value="Asp_decarbox"/>
    <property type="match status" value="1"/>
</dbReference>
<dbReference type="SUPFAM" id="SSF50692">
    <property type="entry name" value="ADC-like"/>
    <property type="match status" value="1"/>
</dbReference>
<reference key="1">
    <citation type="journal article" date="2006" name="Proc. Natl. Acad. Sci. U.S.A.">
        <title>Evolution of sensory complexity recorded in a myxobacterial genome.</title>
        <authorList>
            <person name="Goldman B.S."/>
            <person name="Nierman W.C."/>
            <person name="Kaiser D."/>
            <person name="Slater S.C."/>
            <person name="Durkin A.S."/>
            <person name="Eisen J.A."/>
            <person name="Ronning C.M."/>
            <person name="Barbazuk W.B."/>
            <person name="Blanchard M."/>
            <person name="Field C."/>
            <person name="Halling C."/>
            <person name="Hinkle G."/>
            <person name="Iartchuk O."/>
            <person name="Kim H.S."/>
            <person name="Mackenzie C."/>
            <person name="Madupu R."/>
            <person name="Miller N."/>
            <person name="Shvartsbeyn A."/>
            <person name="Sullivan S.A."/>
            <person name="Vaudin M."/>
            <person name="Wiegand R."/>
            <person name="Kaplan H.B."/>
        </authorList>
    </citation>
    <scope>NUCLEOTIDE SEQUENCE [LARGE SCALE GENOMIC DNA]</scope>
    <source>
        <strain>DK1622</strain>
    </source>
</reference>
<feature type="chain" id="PRO_0000307035" description="Aspartate 1-decarboxylase beta chain" evidence="1">
    <location>
        <begin position="1"/>
        <end position="24"/>
    </location>
</feature>
<feature type="chain" id="PRO_0000307036" description="Aspartate 1-decarboxylase alpha chain" evidence="1">
    <location>
        <begin position="25"/>
        <end position="130"/>
    </location>
</feature>
<feature type="active site" description="Schiff-base intermediate with substrate; via pyruvic acid" evidence="1">
    <location>
        <position position="25"/>
    </location>
</feature>
<feature type="active site" description="Proton donor" evidence="1">
    <location>
        <position position="58"/>
    </location>
</feature>
<feature type="binding site" evidence="1">
    <location>
        <position position="57"/>
    </location>
    <ligand>
        <name>substrate</name>
    </ligand>
</feature>
<feature type="binding site" evidence="1">
    <location>
        <begin position="73"/>
        <end position="75"/>
    </location>
    <ligand>
        <name>substrate</name>
    </ligand>
</feature>
<feature type="modified residue" description="Pyruvic acid (Ser)" evidence="1">
    <location>
        <position position="25"/>
    </location>
</feature>
<protein>
    <recommendedName>
        <fullName evidence="1">Aspartate 1-decarboxylase</fullName>
        <ecNumber evidence="1">4.1.1.11</ecNumber>
    </recommendedName>
    <alternativeName>
        <fullName evidence="1">Aspartate alpha-decarboxylase</fullName>
    </alternativeName>
    <component>
        <recommendedName>
            <fullName evidence="1">Aspartate 1-decarboxylase beta chain</fullName>
        </recommendedName>
    </component>
    <component>
        <recommendedName>
            <fullName evidence="1">Aspartate 1-decarboxylase alpha chain</fullName>
        </recommendedName>
    </component>
</protein>
<keyword id="KW-0068">Autocatalytic cleavage</keyword>
<keyword id="KW-0963">Cytoplasm</keyword>
<keyword id="KW-0210">Decarboxylase</keyword>
<keyword id="KW-0456">Lyase</keyword>
<keyword id="KW-0566">Pantothenate biosynthesis</keyword>
<keyword id="KW-0670">Pyruvate</keyword>
<keyword id="KW-1185">Reference proteome</keyword>
<keyword id="KW-0704">Schiff base</keyword>
<keyword id="KW-0865">Zymogen</keyword>
<sequence>MRRILFKSKIHRATVTQADLDYEGSVTIDRDLLRAADIVENEKVAVWNITQGTRLETYALEGEAGSGVICINGAAAHLNKPGDLVILATFAEVEEAEVANWKPTVVFVDKDNRVVPGQTKEIPGPQRRSA</sequence>
<gene>
    <name evidence="1" type="primary">panD</name>
    <name type="ordered locus">MXAN_6830</name>
</gene>
<organism>
    <name type="scientific">Myxococcus xanthus (strain DK1622)</name>
    <dbReference type="NCBI Taxonomy" id="246197"/>
    <lineage>
        <taxon>Bacteria</taxon>
        <taxon>Pseudomonadati</taxon>
        <taxon>Myxococcota</taxon>
        <taxon>Myxococcia</taxon>
        <taxon>Myxococcales</taxon>
        <taxon>Cystobacterineae</taxon>
        <taxon>Myxococcaceae</taxon>
        <taxon>Myxococcus</taxon>
    </lineage>
</organism>